<keyword id="KW-0050">Antiport</keyword>
<keyword id="KW-0997">Cell inner membrane</keyword>
<keyword id="KW-1003">Cell membrane</keyword>
<keyword id="KW-0406">Ion transport</keyword>
<keyword id="KW-0472">Membrane</keyword>
<keyword id="KW-0915">Sodium</keyword>
<keyword id="KW-0739">Sodium transport</keyword>
<keyword id="KW-0812">Transmembrane</keyword>
<keyword id="KW-1133">Transmembrane helix</keyword>
<keyword id="KW-0813">Transport</keyword>
<name>NHAA_RICM5</name>
<comment type="function">
    <text evidence="1">Na(+)/H(+) antiporter that extrudes sodium in exchange for external protons.</text>
</comment>
<comment type="catalytic activity">
    <reaction evidence="1">
        <text>Na(+)(in) + 2 H(+)(out) = Na(+)(out) + 2 H(+)(in)</text>
        <dbReference type="Rhea" id="RHEA:29251"/>
        <dbReference type="ChEBI" id="CHEBI:15378"/>
        <dbReference type="ChEBI" id="CHEBI:29101"/>
    </reaction>
    <physiologicalReaction direction="left-to-right" evidence="1">
        <dbReference type="Rhea" id="RHEA:29252"/>
    </physiologicalReaction>
</comment>
<comment type="subcellular location">
    <subcellularLocation>
        <location evidence="1">Cell inner membrane</location>
        <topology evidence="1">Multi-pass membrane protein</topology>
    </subcellularLocation>
</comment>
<comment type="similarity">
    <text evidence="1">Belongs to the NhaA Na(+)/H(+) (TC 2.A.33) antiporter family.</text>
</comment>
<feature type="chain" id="PRO_0000334400" description="Na(+)/H(+) antiporter NhaA">
    <location>
        <begin position="1"/>
        <end position="406"/>
    </location>
</feature>
<feature type="transmembrane region" description="Helical" evidence="1">
    <location>
        <begin position="29"/>
        <end position="49"/>
    </location>
</feature>
<feature type="transmembrane region" description="Helical" evidence="1">
    <location>
        <begin position="75"/>
        <end position="95"/>
    </location>
</feature>
<feature type="transmembrane region" description="Helical" evidence="1">
    <location>
        <begin position="111"/>
        <end position="131"/>
    </location>
</feature>
<feature type="transmembrane region" description="Helical" evidence="1">
    <location>
        <begin position="141"/>
        <end position="161"/>
    </location>
</feature>
<feature type="transmembrane region" description="Helical" evidence="1">
    <location>
        <begin position="170"/>
        <end position="190"/>
    </location>
</feature>
<feature type="transmembrane region" description="Helical" evidence="1">
    <location>
        <begin position="195"/>
        <end position="215"/>
    </location>
</feature>
<feature type="transmembrane region" description="Helical" evidence="1">
    <location>
        <begin position="220"/>
        <end position="240"/>
    </location>
</feature>
<feature type="transmembrane region" description="Helical" evidence="1">
    <location>
        <begin position="242"/>
        <end position="262"/>
    </location>
</feature>
<feature type="transmembrane region" description="Helical" evidence="1">
    <location>
        <begin position="278"/>
        <end position="298"/>
    </location>
</feature>
<feature type="transmembrane region" description="Helical" evidence="1">
    <location>
        <begin position="306"/>
        <end position="326"/>
    </location>
</feature>
<feature type="transmembrane region" description="Helical" evidence="1">
    <location>
        <begin position="349"/>
        <end position="369"/>
    </location>
</feature>
<feature type="transmembrane region" description="Helical" evidence="1">
    <location>
        <begin position="382"/>
        <end position="402"/>
    </location>
</feature>
<accession>A8F302</accession>
<gene>
    <name evidence="1" type="primary">nhaA</name>
    <name type="ordered locus">RMA_1351</name>
</gene>
<proteinExistence type="inferred from homology"/>
<protein>
    <recommendedName>
        <fullName evidence="1">Na(+)/H(+) antiporter NhaA</fullName>
    </recommendedName>
    <alternativeName>
        <fullName evidence="1">Sodium/proton antiporter NhaA</fullName>
    </alternativeName>
</protein>
<sequence>MTYYELVITNIKIMSINNQLRELIKSGTFAGILLIIAFTLAIIVSNNIFLTKYYSSFIYSKFSLTIGNVRLQTTFIELVNDGLMTFFFLLIGLEMKFHLVEGEHKNKKKLILPAVAALGGVVVPVLIYMFFNYDKPRLIKGWAIPIATDTAFVLGILSFFSRHISLELRAFIIGFSLIDDAFALIILALFYTKTINTPALLISSVIIFILFILNYRQVKQLFYYIIVGLLLWISMVESGIQGTLCGAIIALFIPVNIKGEFNTSFKKLENLTSPFVNYFILPLFVFMNSGILLEYFAFKGTCSNSILALIYGIIFGLFVGKQLGIMLFSYPFVKFKLCNLPSDTSWLKFYSIAILGGIGFTLSLFIGSITFESSCPSNSMRAAVIIGSLISALFGVAVLKYCTGKE</sequence>
<evidence type="ECO:0000255" key="1">
    <source>
        <dbReference type="HAMAP-Rule" id="MF_01844"/>
    </source>
</evidence>
<reference key="1">
    <citation type="journal article" date="2007" name="Genome Res.">
        <title>Lateral gene transfer between obligate intracellular bacteria: evidence from the Rickettsia massiliae genome.</title>
        <authorList>
            <person name="Blanc G."/>
            <person name="Ogata H."/>
            <person name="Robert C."/>
            <person name="Audic S."/>
            <person name="Claverie J.-M."/>
            <person name="Raoult D."/>
        </authorList>
    </citation>
    <scope>NUCLEOTIDE SEQUENCE [LARGE SCALE GENOMIC DNA]</scope>
    <source>
        <strain>Mtu5</strain>
    </source>
</reference>
<dbReference type="EMBL" id="CP000683">
    <property type="protein sequence ID" value="ABV85288.1"/>
    <property type="molecule type" value="Genomic_DNA"/>
</dbReference>
<dbReference type="SMR" id="A8F302"/>
<dbReference type="KEGG" id="rms:RMA_1351"/>
<dbReference type="HOGENOM" id="CLU_015803_1_0_5"/>
<dbReference type="Proteomes" id="UP000001311">
    <property type="component" value="Chromosome"/>
</dbReference>
<dbReference type="GO" id="GO:0005886">
    <property type="term" value="C:plasma membrane"/>
    <property type="evidence" value="ECO:0007669"/>
    <property type="project" value="UniProtKB-SubCell"/>
</dbReference>
<dbReference type="GO" id="GO:0015385">
    <property type="term" value="F:sodium:proton antiporter activity"/>
    <property type="evidence" value="ECO:0007669"/>
    <property type="project" value="TreeGrafter"/>
</dbReference>
<dbReference type="GO" id="GO:0006885">
    <property type="term" value="P:regulation of pH"/>
    <property type="evidence" value="ECO:0007669"/>
    <property type="project" value="InterPro"/>
</dbReference>
<dbReference type="Gene3D" id="1.20.1530.10">
    <property type="entry name" value="Na+/H+ antiporter like domain"/>
    <property type="match status" value="1"/>
</dbReference>
<dbReference type="HAMAP" id="MF_01844">
    <property type="entry name" value="NhaA"/>
    <property type="match status" value="1"/>
</dbReference>
<dbReference type="InterPro" id="IPR023171">
    <property type="entry name" value="Na/H_antiporter_dom_sf"/>
</dbReference>
<dbReference type="InterPro" id="IPR004670">
    <property type="entry name" value="NhaA"/>
</dbReference>
<dbReference type="NCBIfam" id="TIGR00773">
    <property type="entry name" value="NhaA"/>
    <property type="match status" value="1"/>
</dbReference>
<dbReference type="PANTHER" id="PTHR30341:SF0">
    <property type="entry name" value="NA(+)_H(+) ANTIPORTER NHAA"/>
    <property type="match status" value="1"/>
</dbReference>
<dbReference type="PANTHER" id="PTHR30341">
    <property type="entry name" value="SODIUM ION/PROTON ANTIPORTER NHAA-RELATED"/>
    <property type="match status" value="1"/>
</dbReference>
<dbReference type="Pfam" id="PF06965">
    <property type="entry name" value="Na_H_antiport_1"/>
    <property type="match status" value="1"/>
</dbReference>
<organism>
    <name type="scientific">Rickettsia massiliae (strain Mtu5)</name>
    <dbReference type="NCBI Taxonomy" id="416276"/>
    <lineage>
        <taxon>Bacteria</taxon>
        <taxon>Pseudomonadati</taxon>
        <taxon>Pseudomonadota</taxon>
        <taxon>Alphaproteobacteria</taxon>
        <taxon>Rickettsiales</taxon>
        <taxon>Rickettsiaceae</taxon>
        <taxon>Rickettsieae</taxon>
        <taxon>Rickettsia</taxon>
        <taxon>spotted fever group</taxon>
    </lineage>
</organism>